<reference key="1">
    <citation type="submission" date="2006-12" db="EMBL/GenBank/DDBJ databases">
        <title>Complete sequence of Shewanella sp. W3-18-1.</title>
        <authorList>
            <consortium name="US DOE Joint Genome Institute"/>
            <person name="Copeland A."/>
            <person name="Lucas S."/>
            <person name="Lapidus A."/>
            <person name="Barry K."/>
            <person name="Detter J.C."/>
            <person name="Glavina del Rio T."/>
            <person name="Hammon N."/>
            <person name="Israni S."/>
            <person name="Dalin E."/>
            <person name="Tice H."/>
            <person name="Pitluck S."/>
            <person name="Chain P."/>
            <person name="Malfatti S."/>
            <person name="Shin M."/>
            <person name="Vergez L."/>
            <person name="Schmutz J."/>
            <person name="Larimer F."/>
            <person name="Land M."/>
            <person name="Hauser L."/>
            <person name="Kyrpides N."/>
            <person name="Lykidis A."/>
            <person name="Tiedje J."/>
            <person name="Richardson P."/>
        </authorList>
    </citation>
    <scope>NUCLEOTIDE SEQUENCE [LARGE SCALE GENOMIC DNA]</scope>
    <source>
        <strain>W3-18-1</strain>
    </source>
</reference>
<evidence type="ECO:0000255" key="1">
    <source>
        <dbReference type="HAMAP-Rule" id="MF_01337"/>
    </source>
</evidence>
<evidence type="ECO:0000305" key="2"/>
<dbReference type="EMBL" id="CP000503">
    <property type="protein sequence ID" value="ABM23025.1"/>
    <property type="molecule type" value="Genomic_DNA"/>
</dbReference>
<dbReference type="RefSeq" id="WP_007644436.1">
    <property type="nucleotide sequence ID" value="NC_008750.1"/>
</dbReference>
<dbReference type="SMR" id="A1RED0"/>
<dbReference type="GeneID" id="67441776"/>
<dbReference type="KEGG" id="shw:Sputw3181_0172"/>
<dbReference type="HOGENOM" id="CLU_098841_0_1_6"/>
<dbReference type="Proteomes" id="UP000002597">
    <property type="component" value="Chromosome"/>
</dbReference>
<dbReference type="GO" id="GO:0022625">
    <property type="term" value="C:cytosolic large ribosomal subunit"/>
    <property type="evidence" value="ECO:0007669"/>
    <property type="project" value="TreeGrafter"/>
</dbReference>
<dbReference type="GO" id="GO:0008097">
    <property type="term" value="F:5S rRNA binding"/>
    <property type="evidence" value="ECO:0007669"/>
    <property type="project" value="TreeGrafter"/>
</dbReference>
<dbReference type="GO" id="GO:0003735">
    <property type="term" value="F:structural constituent of ribosome"/>
    <property type="evidence" value="ECO:0007669"/>
    <property type="project" value="InterPro"/>
</dbReference>
<dbReference type="GO" id="GO:0006412">
    <property type="term" value="P:translation"/>
    <property type="evidence" value="ECO:0007669"/>
    <property type="project" value="UniProtKB-UniRule"/>
</dbReference>
<dbReference type="CDD" id="cd00432">
    <property type="entry name" value="Ribosomal_L18_L5e"/>
    <property type="match status" value="1"/>
</dbReference>
<dbReference type="FunFam" id="3.30.420.100:FF:000001">
    <property type="entry name" value="50S ribosomal protein L18"/>
    <property type="match status" value="1"/>
</dbReference>
<dbReference type="Gene3D" id="3.30.420.100">
    <property type="match status" value="1"/>
</dbReference>
<dbReference type="HAMAP" id="MF_01337_B">
    <property type="entry name" value="Ribosomal_uL18_B"/>
    <property type="match status" value="1"/>
</dbReference>
<dbReference type="InterPro" id="IPR004389">
    <property type="entry name" value="Ribosomal_uL18_bac-type"/>
</dbReference>
<dbReference type="InterPro" id="IPR005484">
    <property type="entry name" value="Ribosomal_uL18_bac/euk"/>
</dbReference>
<dbReference type="NCBIfam" id="TIGR00060">
    <property type="entry name" value="L18_bact"/>
    <property type="match status" value="1"/>
</dbReference>
<dbReference type="PANTHER" id="PTHR12899">
    <property type="entry name" value="39S RIBOSOMAL PROTEIN L18, MITOCHONDRIAL"/>
    <property type="match status" value="1"/>
</dbReference>
<dbReference type="PANTHER" id="PTHR12899:SF3">
    <property type="entry name" value="LARGE RIBOSOMAL SUBUNIT PROTEIN UL18M"/>
    <property type="match status" value="1"/>
</dbReference>
<dbReference type="Pfam" id="PF00861">
    <property type="entry name" value="Ribosomal_L18p"/>
    <property type="match status" value="1"/>
</dbReference>
<dbReference type="SUPFAM" id="SSF53137">
    <property type="entry name" value="Translational machinery components"/>
    <property type="match status" value="1"/>
</dbReference>
<sequence length="116" mass="12696">MDKKTSRLRRAIRARKKIQELGVNRLVVHRTPRHIYAQVINPEAQVVAAASTVEKAVKEQLKSTGNVDAAKAVGKFVAERAIEKGVTSVAFDRSGFKYHGRVAALADAAREAGLQF</sequence>
<comment type="function">
    <text evidence="1">This is one of the proteins that bind and probably mediate the attachment of the 5S RNA into the large ribosomal subunit, where it forms part of the central protuberance.</text>
</comment>
<comment type="subunit">
    <text evidence="1">Part of the 50S ribosomal subunit; part of the 5S rRNA/L5/L18/L25 subcomplex. Contacts the 5S and 23S rRNAs.</text>
</comment>
<comment type="similarity">
    <text evidence="1">Belongs to the universal ribosomal protein uL18 family.</text>
</comment>
<proteinExistence type="inferred from homology"/>
<accession>A1RED0</accession>
<feature type="chain" id="PRO_1000053113" description="Large ribosomal subunit protein uL18">
    <location>
        <begin position="1"/>
        <end position="116"/>
    </location>
</feature>
<gene>
    <name evidence="1" type="primary">rplR</name>
    <name type="ordered locus">Sputw3181_0172</name>
</gene>
<protein>
    <recommendedName>
        <fullName evidence="1">Large ribosomal subunit protein uL18</fullName>
    </recommendedName>
    <alternativeName>
        <fullName evidence="2">50S ribosomal protein L18</fullName>
    </alternativeName>
</protein>
<keyword id="KW-0687">Ribonucleoprotein</keyword>
<keyword id="KW-0689">Ribosomal protein</keyword>
<keyword id="KW-0694">RNA-binding</keyword>
<keyword id="KW-0699">rRNA-binding</keyword>
<organism>
    <name type="scientific">Shewanella sp. (strain W3-18-1)</name>
    <dbReference type="NCBI Taxonomy" id="351745"/>
    <lineage>
        <taxon>Bacteria</taxon>
        <taxon>Pseudomonadati</taxon>
        <taxon>Pseudomonadota</taxon>
        <taxon>Gammaproteobacteria</taxon>
        <taxon>Alteromonadales</taxon>
        <taxon>Shewanellaceae</taxon>
        <taxon>Shewanella</taxon>
    </lineage>
</organism>
<name>RL18_SHESW</name>